<name>NDUBA_MOUSE</name>
<reference key="1">
    <citation type="journal article" date="2005" name="Science">
        <title>The transcriptional landscape of the mammalian genome.</title>
        <authorList>
            <person name="Carninci P."/>
            <person name="Kasukawa T."/>
            <person name="Katayama S."/>
            <person name="Gough J."/>
            <person name="Frith M.C."/>
            <person name="Maeda N."/>
            <person name="Oyama R."/>
            <person name="Ravasi T."/>
            <person name="Lenhard B."/>
            <person name="Wells C."/>
            <person name="Kodzius R."/>
            <person name="Shimokawa K."/>
            <person name="Bajic V.B."/>
            <person name="Brenner S.E."/>
            <person name="Batalov S."/>
            <person name="Forrest A.R."/>
            <person name="Zavolan M."/>
            <person name="Davis M.J."/>
            <person name="Wilming L.G."/>
            <person name="Aidinis V."/>
            <person name="Allen J.E."/>
            <person name="Ambesi-Impiombato A."/>
            <person name="Apweiler R."/>
            <person name="Aturaliya R.N."/>
            <person name="Bailey T.L."/>
            <person name="Bansal M."/>
            <person name="Baxter L."/>
            <person name="Beisel K.W."/>
            <person name="Bersano T."/>
            <person name="Bono H."/>
            <person name="Chalk A.M."/>
            <person name="Chiu K.P."/>
            <person name="Choudhary V."/>
            <person name="Christoffels A."/>
            <person name="Clutterbuck D.R."/>
            <person name="Crowe M.L."/>
            <person name="Dalla E."/>
            <person name="Dalrymple B.P."/>
            <person name="de Bono B."/>
            <person name="Della Gatta G."/>
            <person name="di Bernardo D."/>
            <person name="Down T."/>
            <person name="Engstrom P."/>
            <person name="Fagiolini M."/>
            <person name="Faulkner G."/>
            <person name="Fletcher C.F."/>
            <person name="Fukushima T."/>
            <person name="Furuno M."/>
            <person name="Futaki S."/>
            <person name="Gariboldi M."/>
            <person name="Georgii-Hemming P."/>
            <person name="Gingeras T.R."/>
            <person name="Gojobori T."/>
            <person name="Green R.E."/>
            <person name="Gustincich S."/>
            <person name="Harbers M."/>
            <person name="Hayashi Y."/>
            <person name="Hensch T.K."/>
            <person name="Hirokawa N."/>
            <person name="Hill D."/>
            <person name="Huminiecki L."/>
            <person name="Iacono M."/>
            <person name="Ikeo K."/>
            <person name="Iwama A."/>
            <person name="Ishikawa T."/>
            <person name="Jakt M."/>
            <person name="Kanapin A."/>
            <person name="Katoh M."/>
            <person name="Kawasawa Y."/>
            <person name="Kelso J."/>
            <person name="Kitamura H."/>
            <person name="Kitano H."/>
            <person name="Kollias G."/>
            <person name="Krishnan S.P."/>
            <person name="Kruger A."/>
            <person name="Kummerfeld S.K."/>
            <person name="Kurochkin I.V."/>
            <person name="Lareau L.F."/>
            <person name="Lazarevic D."/>
            <person name="Lipovich L."/>
            <person name="Liu J."/>
            <person name="Liuni S."/>
            <person name="McWilliam S."/>
            <person name="Madan Babu M."/>
            <person name="Madera M."/>
            <person name="Marchionni L."/>
            <person name="Matsuda H."/>
            <person name="Matsuzawa S."/>
            <person name="Miki H."/>
            <person name="Mignone F."/>
            <person name="Miyake S."/>
            <person name="Morris K."/>
            <person name="Mottagui-Tabar S."/>
            <person name="Mulder N."/>
            <person name="Nakano N."/>
            <person name="Nakauchi H."/>
            <person name="Ng P."/>
            <person name="Nilsson R."/>
            <person name="Nishiguchi S."/>
            <person name="Nishikawa S."/>
            <person name="Nori F."/>
            <person name="Ohara O."/>
            <person name="Okazaki Y."/>
            <person name="Orlando V."/>
            <person name="Pang K.C."/>
            <person name="Pavan W.J."/>
            <person name="Pavesi G."/>
            <person name="Pesole G."/>
            <person name="Petrovsky N."/>
            <person name="Piazza S."/>
            <person name="Reed J."/>
            <person name="Reid J.F."/>
            <person name="Ring B.Z."/>
            <person name="Ringwald M."/>
            <person name="Rost B."/>
            <person name="Ruan Y."/>
            <person name="Salzberg S.L."/>
            <person name="Sandelin A."/>
            <person name="Schneider C."/>
            <person name="Schoenbach C."/>
            <person name="Sekiguchi K."/>
            <person name="Semple C.A."/>
            <person name="Seno S."/>
            <person name="Sessa L."/>
            <person name="Sheng Y."/>
            <person name="Shibata Y."/>
            <person name="Shimada H."/>
            <person name="Shimada K."/>
            <person name="Silva D."/>
            <person name="Sinclair B."/>
            <person name="Sperling S."/>
            <person name="Stupka E."/>
            <person name="Sugiura K."/>
            <person name="Sultana R."/>
            <person name="Takenaka Y."/>
            <person name="Taki K."/>
            <person name="Tammoja K."/>
            <person name="Tan S.L."/>
            <person name="Tang S."/>
            <person name="Taylor M.S."/>
            <person name="Tegner J."/>
            <person name="Teichmann S.A."/>
            <person name="Ueda H.R."/>
            <person name="van Nimwegen E."/>
            <person name="Verardo R."/>
            <person name="Wei C.L."/>
            <person name="Yagi K."/>
            <person name="Yamanishi H."/>
            <person name="Zabarovsky E."/>
            <person name="Zhu S."/>
            <person name="Zimmer A."/>
            <person name="Hide W."/>
            <person name="Bult C."/>
            <person name="Grimmond S.M."/>
            <person name="Teasdale R.D."/>
            <person name="Liu E.T."/>
            <person name="Brusic V."/>
            <person name="Quackenbush J."/>
            <person name="Wahlestedt C."/>
            <person name="Mattick J.S."/>
            <person name="Hume D.A."/>
            <person name="Kai C."/>
            <person name="Sasaki D."/>
            <person name="Tomaru Y."/>
            <person name="Fukuda S."/>
            <person name="Kanamori-Katayama M."/>
            <person name="Suzuki M."/>
            <person name="Aoki J."/>
            <person name="Arakawa T."/>
            <person name="Iida J."/>
            <person name="Imamura K."/>
            <person name="Itoh M."/>
            <person name="Kato T."/>
            <person name="Kawaji H."/>
            <person name="Kawagashira N."/>
            <person name="Kawashima T."/>
            <person name="Kojima M."/>
            <person name="Kondo S."/>
            <person name="Konno H."/>
            <person name="Nakano K."/>
            <person name="Ninomiya N."/>
            <person name="Nishio T."/>
            <person name="Okada M."/>
            <person name="Plessy C."/>
            <person name="Shibata K."/>
            <person name="Shiraki T."/>
            <person name="Suzuki S."/>
            <person name="Tagami M."/>
            <person name="Waki K."/>
            <person name="Watahiki A."/>
            <person name="Okamura-Oho Y."/>
            <person name="Suzuki H."/>
            <person name="Kawai J."/>
            <person name="Hayashizaki Y."/>
        </authorList>
    </citation>
    <scope>NUCLEOTIDE SEQUENCE [LARGE SCALE MRNA]</scope>
    <source>
        <strain>C57BL/6J</strain>
        <tissue>Bone marrow</tissue>
        <tissue>Kidney</tissue>
    </source>
</reference>
<reference key="2">
    <citation type="journal article" date="2004" name="Genome Res.">
        <title>The status, quality, and expansion of the NIH full-length cDNA project: the Mammalian Gene Collection (MGC).</title>
        <authorList>
            <consortium name="The MGC Project Team"/>
        </authorList>
    </citation>
    <scope>NUCLEOTIDE SEQUENCE [LARGE SCALE MRNA]</scope>
    <source>
        <strain>C57BL/6J</strain>
        <tissue>Brain</tissue>
        <tissue>Colon</tissue>
    </source>
</reference>
<reference key="3">
    <citation type="submission" date="2007-04" db="UniProtKB">
        <authorList>
            <person name="Lubec G."/>
            <person name="Kang S.U."/>
        </authorList>
    </citation>
    <scope>PROTEIN SEQUENCE OF 2-49; 71-93; 95-109; 128-134 AND 143-153</scope>
    <scope>IDENTIFICATION BY MASS SPECTROMETRY</scope>
    <source>
        <strain>C57BL/6J</strain>
        <tissue>Brain</tissue>
    </source>
</reference>
<reference key="4">
    <citation type="journal article" date="2010" name="Cell">
        <title>A tissue-specific atlas of mouse protein phosphorylation and expression.</title>
        <authorList>
            <person name="Huttlin E.L."/>
            <person name="Jedrychowski M.P."/>
            <person name="Elias J.E."/>
            <person name="Goswami T."/>
            <person name="Rad R."/>
            <person name="Beausoleil S.A."/>
            <person name="Villen J."/>
            <person name="Haas W."/>
            <person name="Sowa M.E."/>
            <person name="Gygi S.P."/>
        </authorList>
    </citation>
    <scope>PHOSPHORYLATION [LARGE SCALE ANALYSIS] AT SER-21</scope>
    <scope>IDENTIFICATION BY MASS SPECTROMETRY [LARGE SCALE ANALYSIS]</scope>
    <source>
        <tissue>Brain</tissue>
        <tissue>Brown adipose tissue</tissue>
        <tissue>Heart</tissue>
        <tissue>Kidney</tissue>
        <tissue>Liver</tissue>
        <tissue>Lung</tissue>
        <tissue>Pancreas</tissue>
        <tissue>Spleen</tissue>
        <tissue>Testis</tissue>
    </source>
</reference>
<reference evidence="5" key="5">
    <citation type="journal article" date="2024" name="Nat. Struct. Mol. Biol.">
        <title>SCAF1 drives the compositional diversity of mammalian respirasomes.</title>
        <authorList>
            <person name="Vercellino I."/>
            <person name="Sazanov L.A."/>
        </authorList>
    </citation>
    <scope>STRUCTURE BY ELECTRON MICROSCOPY (3.60 ANGSTROMS) IN COMPLEX WITH MITOCHONDRIAL RESPIRATORY SUPERCOMPLEX</scope>
    <scope>FUNCTION</scope>
    <scope>SUBCELLULAR LOCATION</scope>
    <scope>SUBUNIT</scope>
</reference>
<comment type="function">
    <text evidence="3">Accessory subunit that is involved in the functional assembly of the mitochondrial respiratory chain complex I. Complex I has an NADH dehydrogenase activity with ubiquinone as an immediate electron acceptor and mediates the transfer of electrons from NADH to the respiratory chain.</text>
</comment>
<comment type="function">
    <text evidence="3">Accessory subunit of the mitochondrial membrane respiratory chain NADH dehydrogenase (Complex I), that is believed not to be involved in catalysis. Complex I functions in the transfer of electrons from NADH to the respiratory chain. The immediate electron acceptor for the enzyme is believed to be ubiquinone.</text>
</comment>
<comment type="subunit">
    <text evidence="3">Complex I is composed of 45 different subunits. Interacts with CHCHD4.</text>
</comment>
<comment type="subcellular location">
    <subcellularLocation>
        <location evidence="3">Mitochondrion inner membrane</location>
        <topology evidence="3">Peripheral membrane protein</topology>
        <orientation evidence="3">Matrix side</orientation>
    </subcellularLocation>
</comment>
<comment type="similarity">
    <text evidence="4">Belongs to the complex I NDUFB10 subunit family.</text>
</comment>
<evidence type="ECO:0000250" key="1">
    <source>
        <dbReference type="UniProtKB" id="O96000"/>
    </source>
</evidence>
<evidence type="ECO:0000256" key="2">
    <source>
        <dbReference type="SAM" id="MobiDB-lite"/>
    </source>
</evidence>
<evidence type="ECO:0000269" key="3">
    <source>
    </source>
</evidence>
<evidence type="ECO:0000305" key="4"/>
<evidence type="ECO:0007744" key="5">
    <source>
        <dbReference type="PDB" id="8PW5"/>
    </source>
</evidence>
<evidence type="ECO:0007744" key="6">
    <source>
    </source>
</evidence>
<evidence type="ECO:0007829" key="7">
    <source>
        <dbReference type="PDB" id="7AK5"/>
    </source>
</evidence>
<evidence type="ECO:0007829" key="8">
    <source>
        <dbReference type="PDB" id="8OM1"/>
    </source>
</evidence>
<evidence type="ECO:0007829" key="9">
    <source>
        <dbReference type="PDB" id="8RGT"/>
    </source>
</evidence>
<sequence length="176" mass="21024">MPDSWDKDVYPEPPSRTPAPSPQTSLPNPITYLTKAYDLVVDWPVTLVREFIERQHAKNRTYYYHRQYRRVPDITECKEGDVLCIYEAEMQWRRDFKVDQEIMNIIQERLKACQQREGENYQQNCAKELEQFTKVTKAYQDRYLDLGAYYSARKCLAKQKQRMLEERKAARQEAAA</sequence>
<keyword id="KW-0002">3D-structure</keyword>
<keyword id="KW-0903">Direct protein sequencing</keyword>
<keyword id="KW-0249">Electron transport</keyword>
<keyword id="KW-0472">Membrane</keyword>
<keyword id="KW-0496">Mitochondrion</keyword>
<keyword id="KW-0999">Mitochondrion inner membrane</keyword>
<keyword id="KW-0597">Phosphoprotein</keyword>
<keyword id="KW-1185">Reference proteome</keyword>
<keyword id="KW-0679">Respiratory chain</keyword>
<keyword id="KW-0813">Transport</keyword>
<accession>Q9DCS9</accession>
<accession>Q3UAE3</accession>
<organism>
    <name type="scientific">Mus musculus</name>
    <name type="common">Mouse</name>
    <dbReference type="NCBI Taxonomy" id="10090"/>
    <lineage>
        <taxon>Eukaryota</taxon>
        <taxon>Metazoa</taxon>
        <taxon>Chordata</taxon>
        <taxon>Craniata</taxon>
        <taxon>Vertebrata</taxon>
        <taxon>Euteleostomi</taxon>
        <taxon>Mammalia</taxon>
        <taxon>Eutheria</taxon>
        <taxon>Euarchontoglires</taxon>
        <taxon>Glires</taxon>
        <taxon>Rodentia</taxon>
        <taxon>Myomorpha</taxon>
        <taxon>Muroidea</taxon>
        <taxon>Muridae</taxon>
        <taxon>Murinae</taxon>
        <taxon>Mus</taxon>
        <taxon>Mus</taxon>
    </lineage>
</organism>
<proteinExistence type="evidence at protein level"/>
<feature type="chain" id="PRO_0000118831" description="NADH dehydrogenase [ubiquinone] 1 beta subcomplex subunit 10">
    <location>
        <begin position="1"/>
        <end position="176"/>
    </location>
</feature>
<feature type="region of interest" description="Disordered" evidence="2">
    <location>
        <begin position="1"/>
        <end position="27"/>
    </location>
</feature>
<feature type="compositionally biased region" description="Basic and acidic residues" evidence="2">
    <location>
        <begin position="1"/>
        <end position="10"/>
    </location>
</feature>
<feature type="compositionally biased region" description="Pro residues" evidence="2">
    <location>
        <begin position="11"/>
        <end position="21"/>
    </location>
</feature>
<feature type="modified residue" description="Phosphoserine" evidence="6">
    <location>
        <position position="21"/>
    </location>
</feature>
<feature type="modified residue" description="Phosphoserine" evidence="1">
    <location>
        <position position="151"/>
    </location>
</feature>
<feature type="turn" evidence="8">
    <location>
        <begin position="7"/>
        <end position="9"/>
    </location>
</feature>
<feature type="strand" evidence="8">
    <location>
        <begin position="24"/>
        <end position="26"/>
    </location>
</feature>
<feature type="helix" evidence="8">
    <location>
        <begin position="29"/>
        <end position="40"/>
    </location>
</feature>
<feature type="helix" evidence="8">
    <location>
        <begin position="42"/>
        <end position="58"/>
    </location>
</feature>
<feature type="strand" evidence="9">
    <location>
        <begin position="62"/>
        <end position="64"/>
    </location>
</feature>
<feature type="helix" evidence="8">
    <location>
        <begin position="74"/>
        <end position="76"/>
    </location>
</feature>
<feature type="strand" evidence="7">
    <location>
        <begin position="77"/>
        <end position="80"/>
    </location>
</feature>
<feature type="helix" evidence="8">
    <location>
        <begin position="82"/>
        <end position="117"/>
    </location>
</feature>
<feature type="helix" evidence="8">
    <location>
        <begin position="118"/>
        <end position="120"/>
    </location>
</feature>
<feature type="helix" evidence="8">
    <location>
        <begin position="121"/>
        <end position="124"/>
    </location>
</feature>
<feature type="helix" evidence="8">
    <location>
        <begin position="126"/>
        <end position="143"/>
    </location>
</feature>
<feature type="helix" evidence="8">
    <location>
        <begin position="152"/>
        <end position="172"/>
    </location>
</feature>
<gene>
    <name type="primary">Ndufb10</name>
</gene>
<protein>
    <recommendedName>
        <fullName>NADH dehydrogenase [ubiquinone] 1 beta subcomplex subunit 10</fullName>
    </recommendedName>
    <alternativeName>
        <fullName>Complex I-PDSW</fullName>
        <shortName>CI-PDSW</shortName>
    </alternativeName>
    <alternativeName>
        <fullName>NADH-ubiquinone oxidoreductase PDSW subunit</fullName>
    </alternativeName>
</protein>
<dbReference type="EMBL" id="AK002517">
    <property type="protein sequence ID" value="BAB22156.1"/>
    <property type="molecule type" value="mRNA"/>
</dbReference>
<dbReference type="EMBL" id="AK151404">
    <property type="protein sequence ID" value="BAE30371.1"/>
    <property type="molecule type" value="mRNA"/>
</dbReference>
<dbReference type="EMBL" id="BC031664">
    <property type="protein sequence ID" value="AAH31664.1"/>
    <property type="molecule type" value="mRNA"/>
</dbReference>
<dbReference type="EMBL" id="BC043013">
    <property type="protein sequence ID" value="AAH43013.1"/>
    <property type="molecule type" value="mRNA"/>
</dbReference>
<dbReference type="CCDS" id="CCDS28494.1"/>
<dbReference type="RefSeq" id="NP_080960.1">
    <property type="nucleotide sequence ID" value="NM_026684.3"/>
</dbReference>
<dbReference type="PDB" id="6G2J">
    <property type="method" value="EM"/>
    <property type="resolution" value="3.30 A"/>
    <property type="chains" value="p=1-176"/>
</dbReference>
<dbReference type="PDB" id="6G72">
    <property type="method" value="EM"/>
    <property type="resolution" value="3.90 A"/>
    <property type="chains" value="p=1-176"/>
</dbReference>
<dbReference type="PDB" id="6ZR2">
    <property type="method" value="EM"/>
    <property type="resolution" value="3.10 A"/>
    <property type="chains" value="p=1-176"/>
</dbReference>
<dbReference type="PDB" id="6ZTQ">
    <property type="method" value="EM"/>
    <property type="resolution" value="3.00 A"/>
    <property type="chains" value="p=1-176"/>
</dbReference>
<dbReference type="PDB" id="7AK5">
    <property type="method" value="EM"/>
    <property type="resolution" value="3.17 A"/>
    <property type="chains" value="p=1-176"/>
</dbReference>
<dbReference type="PDB" id="7AK6">
    <property type="method" value="EM"/>
    <property type="resolution" value="3.82 A"/>
    <property type="chains" value="p=1-176"/>
</dbReference>
<dbReference type="PDB" id="7B93">
    <property type="method" value="EM"/>
    <property type="resolution" value="3.04 A"/>
    <property type="chains" value="p=1-176"/>
</dbReference>
<dbReference type="PDB" id="7PSA">
    <property type="method" value="EM"/>
    <property type="resolution" value="3.40 A"/>
    <property type="chains" value="p=1-176"/>
</dbReference>
<dbReference type="PDB" id="8C2S">
    <property type="method" value="EM"/>
    <property type="resolution" value="3.90 A"/>
    <property type="chains" value="p=1-176"/>
</dbReference>
<dbReference type="PDB" id="8CA3">
    <property type="method" value="EM"/>
    <property type="resolution" value="3.20 A"/>
    <property type="chains" value="p=1-176"/>
</dbReference>
<dbReference type="PDB" id="8CA5">
    <property type="method" value="EM"/>
    <property type="resolution" value="3.90 A"/>
    <property type="chains" value="p=1-176"/>
</dbReference>
<dbReference type="PDB" id="8IAO">
    <property type="method" value="EM"/>
    <property type="resolution" value="4.20 A"/>
    <property type="chains" value="p=1-176"/>
</dbReference>
<dbReference type="PDB" id="8IAQ">
    <property type="method" value="EM"/>
    <property type="resolution" value="3.40 A"/>
    <property type="chains" value="p=1-176"/>
</dbReference>
<dbReference type="PDB" id="8IB4">
    <property type="method" value="EM"/>
    <property type="resolution" value="4.30 A"/>
    <property type="chains" value="p=1-176"/>
</dbReference>
<dbReference type="PDB" id="8IB6">
    <property type="method" value="EM"/>
    <property type="resolution" value="3.30 A"/>
    <property type="chains" value="p=1-176"/>
</dbReference>
<dbReference type="PDB" id="8IB9">
    <property type="method" value="EM"/>
    <property type="resolution" value="4.30 A"/>
    <property type="chains" value="p=1-176"/>
</dbReference>
<dbReference type="PDB" id="8IBB">
    <property type="method" value="EM"/>
    <property type="resolution" value="3.30 A"/>
    <property type="chains" value="p=1-176"/>
</dbReference>
<dbReference type="PDB" id="8IBD">
    <property type="method" value="EM"/>
    <property type="resolution" value="4.20 A"/>
    <property type="chains" value="p=1-176"/>
</dbReference>
<dbReference type="PDB" id="8IBF">
    <property type="method" value="EM"/>
    <property type="resolution" value="3.30 A"/>
    <property type="chains" value="p=1-176"/>
</dbReference>
<dbReference type="PDB" id="8IC2">
    <property type="method" value="EM"/>
    <property type="resolution" value="6.30 A"/>
    <property type="chains" value="p=1-176"/>
</dbReference>
<dbReference type="PDB" id="8IC4">
    <property type="method" value="EM"/>
    <property type="resolution" value="3.20 A"/>
    <property type="chains" value="p=1-176"/>
</dbReference>
<dbReference type="PDB" id="8OLT">
    <property type="method" value="EM"/>
    <property type="resolution" value="2.84 A"/>
    <property type="chains" value="p=1-176"/>
</dbReference>
<dbReference type="PDB" id="8OM1">
    <property type="method" value="EM"/>
    <property type="resolution" value="2.39 A"/>
    <property type="chains" value="p=1-176"/>
</dbReference>
<dbReference type="PDB" id="8PW5">
    <property type="method" value="EM"/>
    <property type="resolution" value="3.60 A"/>
    <property type="chains" value="p1=1-176"/>
</dbReference>
<dbReference type="PDB" id="8PW6">
    <property type="method" value="EM"/>
    <property type="resolution" value="3.30 A"/>
    <property type="chains" value="p1=1-176"/>
</dbReference>
<dbReference type="PDB" id="8PW7">
    <property type="method" value="EM"/>
    <property type="resolution" value="3.50 A"/>
    <property type="chains" value="p1=1-176"/>
</dbReference>
<dbReference type="PDB" id="8RGP">
    <property type="method" value="EM"/>
    <property type="resolution" value="3.00 A"/>
    <property type="chains" value="p=1-176"/>
</dbReference>
<dbReference type="PDB" id="8RGQ">
    <property type="method" value="EM"/>
    <property type="resolution" value="3.00 A"/>
    <property type="chains" value="p=1-176"/>
</dbReference>
<dbReference type="PDB" id="8RGR">
    <property type="method" value="EM"/>
    <property type="resolution" value="2.90 A"/>
    <property type="chains" value="p=1-176"/>
</dbReference>
<dbReference type="PDB" id="8RGT">
    <property type="method" value="EM"/>
    <property type="resolution" value="3.10 A"/>
    <property type="chains" value="p=1-176"/>
</dbReference>
<dbReference type="PDB" id="8UCA">
    <property type="method" value="EM"/>
    <property type="resolution" value="3.70 A"/>
    <property type="chains" value="BL/bl=1-176"/>
</dbReference>
<dbReference type="PDBsum" id="6G2J"/>
<dbReference type="PDBsum" id="6G72"/>
<dbReference type="PDBsum" id="6ZR2"/>
<dbReference type="PDBsum" id="6ZTQ"/>
<dbReference type="PDBsum" id="7AK5"/>
<dbReference type="PDBsum" id="7AK6"/>
<dbReference type="PDBsum" id="7B93"/>
<dbReference type="PDBsum" id="7PSA"/>
<dbReference type="PDBsum" id="8C2S"/>
<dbReference type="PDBsum" id="8CA3"/>
<dbReference type="PDBsum" id="8CA5"/>
<dbReference type="PDBsum" id="8IAO"/>
<dbReference type="PDBsum" id="8IAQ"/>
<dbReference type="PDBsum" id="8IB4"/>
<dbReference type="PDBsum" id="8IB6"/>
<dbReference type="PDBsum" id="8IB9"/>
<dbReference type="PDBsum" id="8IBB"/>
<dbReference type="PDBsum" id="8IBD"/>
<dbReference type="PDBsum" id="8IBF"/>
<dbReference type="PDBsum" id="8IC2"/>
<dbReference type="PDBsum" id="8IC4"/>
<dbReference type="PDBsum" id="8OLT"/>
<dbReference type="PDBsum" id="8OM1"/>
<dbReference type="PDBsum" id="8PW5"/>
<dbReference type="PDBsum" id="8PW6"/>
<dbReference type="PDBsum" id="8PW7"/>
<dbReference type="PDBsum" id="8RGP"/>
<dbReference type="PDBsum" id="8RGQ"/>
<dbReference type="PDBsum" id="8RGR"/>
<dbReference type="PDBsum" id="8RGT"/>
<dbReference type="PDBsum" id="8UCA"/>
<dbReference type="EMDB" id="EMD-11377"/>
<dbReference type="EMDB" id="EMD-11424"/>
<dbReference type="EMDB" id="EMD-11810"/>
<dbReference type="EMDB" id="EMD-11811"/>
<dbReference type="EMDB" id="EMD-12095"/>
<dbReference type="EMDB" id="EMD-13611"/>
<dbReference type="EMDB" id="EMD-16398"/>
<dbReference type="EMDB" id="EMD-16516"/>
<dbReference type="EMDB" id="EMD-16518"/>
<dbReference type="EMDB" id="EMD-16962"/>
<dbReference type="EMDB" id="EMD-16965"/>
<dbReference type="EMDB" id="EMD-17989"/>
<dbReference type="EMDB" id="EMD-17990"/>
<dbReference type="EMDB" id="EMD-17991"/>
<dbReference type="EMDB" id="EMD-19145"/>
<dbReference type="EMDB" id="EMD-19146"/>
<dbReference type="EMDB" id="EMD-19147"/>
<dbReference type="EMDB" id="EMD-19148"/>
<dbReference type="EMDB" id="EMD-35313"/>
<dbReference type="EMDB" id="EMD-35315"/>
<dbReference type="EMDB" id="EMD-35331"/>
<dbReference type="EMDB" id="EMD-35333"/>
<dbReference type="EMDB" id="EMD-35336"/>
<dbReference type="EMDB" id="EMD-35338"/>
<dbReference type="EMDB" id="EMD-35340"/>
<dbReference type="EMDB" id="EMD-35342"/>
<dbReference type="EMDB" id="EMD-35352"/>
<dbReference type="EMDB" id="EMD-35354"/>
<dbReference type="EMDB" id="EMD-42122"/>
<dbReference type="EMDB" id="EMD-4345"/>
<dbReference type="EMDB" id="EMD-4356"/>
<dbReference type="SMR" id="Q9DCS9"/>
<dbReference type="BioGRID" id="212811">
    <property type="interactions" value="91"/>
</dbReference>
<dbReference type="ComplexPortal" id="CPX-266">
    <property type="entry name" value="Mitochondrial respiratory chain complex I"/>
</dbReference>
<dbReference type="CORUM" id="Q9DCS9"/>
<dbReference type="FunCoup" id="Q9DCS9">
    <property type="interactions" value="2164"/>
</dbReference>
<dbReference type="IntAct" id="Q9DCS9">
    <property type="interactions" value="3"/>
</dbReference>
<dbReference type="STRING" id="10090.ENSMUSP00000043543"/>
<dbReference type="TCDB" id="3.D.1.6.1">
    <property type="family name" value="the h+ or na+-translocating nadh dehydrogenase (ndh) family"/>
</dbReference>
<dbReference type="GlyGen" id="Q9DCS9">
    <property type="glycosylation" value="2 sites, 1 O-linked glycan (2 sites)"/>
</dbReference>
<dbReference type="iPTMnet" id="Q9DCS9"/>
<dbReference type="PhosphoSitePlus" id="Q9DCS9"/>
<dbReference type="SwissPalm" id="Q9DCS9"/>
<dbReference type="jPOST" id="Q9DCS9"/>
<dbReference type="PaxDb" id="10090-ENSMUSP00000043543"/>
<dbReference type="PeptideAtlas" id="Q9DCS9"/>
<dbReference type="ProteomicsDB" id="252868"/>
<dbReference type="Pumba" id="Q9DCS9"/>
<dbReference type="Antibodypedia" id="23340">
    <property type="antibodies" value="347 antibodies from 31 providers"/>
</dbReference>
<dbReference type="DNASU" id="68342"/>
<dbReference type="Ensembl" id="ENSMUST00000045602.9">
    <property type="protein sequence ID" value="ENSMUSP00000043543.9"/>
    <property type="gene ID" value="ENSMUSG00000040048.15"/>
</dbReference>
<dbReference type="GeneID" id="68342"/>
<dbReference type="KEGG" id="mmu:68342"/>
<dbReference type="UCSC" id="uc008ayd.1">
    <property type="organism name" value="mouse"/>
</dbReference>
<dbReference type="AGR" id="MGI:1915592"/>
<dbReference type="CTD" id="4716"/>
<dbReference type="MGI" id="MGI:1915592">
    <property type="gene designation" value="Ndufb10"/>
</dbReference>
<dbReference type="VEuPathDB" id="HostDB:ENSMUSG00000040048"/>
<dbReference type="eggNOG" id="KOG4009">
    <property type="taxonomic scope" value="Eukaryota"/>
</dbReference>
<dbReference type="GeneTree" id="ENSGT00390000006348"/>
<dbReference type="InParanoid" id="Q9DCS9"/>
<dbReference type="OMA" id="CKPILEQ"/>
<dbReference type="OrthoDB" id="72220at9989"/>
<dbReference type="PhylomeDB" id="Q9DCS9"/>
<dbReference type="TreeFam" id="TF105792"/>
<dbReference type="Reactome" id="R-MMU-611105">
    <property type="pathway name" value="Respiratory electron transport"/>
</dbReference>
<dbReference type="Reactome" id="R-MMU-6799198">
    <property type="pathway name" value="Complex I biogenesis"/>
</dbReference>
<dbReference type="BioGRID-ORCS" id="68342">
    <property type="hits" value="25 hits in 80 CRISPR screens"/>
</dbReference>
<dbReference type="CD-CODE" id="CE726F99">
    <property type="entry name" value="Postsynaptic density"/>
</dbReference>
<dbReference type="ChiTaRS" id="Ndufb10">
    <property type="organism name" value="mouse"/>
</dbReference>
<dbReference type="PRO" id="PR:Q9DCS9"/>
<dbReference type="Proteomes" id="UP000000589">
    <property type="component" value="Chromosome 17"/>
</dbReference>
<dbReference type="RNAct" id="Q9DCS9">
    <property type="molecule type" value="protein"/>
</dbReference>
<dbReference type="Bgee" id="ENSMUSG00000040048">
    <property type="expression patterns" value="Expressed in interventricular septum and 263 other cell types or tissues"/>
</dbReference>
<dbReference type="ExpressionAtlas" id="Q9DCS9">
    <property type="expression patterns" value="baseline and differential"/>
</dbReference>
<dbReference type="GO" id="GO:0005743">
    <property type="term" value="C:mitochondrial inner membrane"/>
    <property type="evidence" value="ECO:0000314"/>
    <property type="project" value="UniProtKB"/>
</dbReference>
<dbReference type="GO" id="GO:0005739">
    <property type="term" value="C:mitochondrion"/>
    <property type="evidence" value="ECO:0007005"/>
    <property type="project" value="MGI"/>
</dbReference>
<dbReference type="GO" id="GO:0045271">
    <property type="term" value="C:respiratory chain complex I"/>
    <property type="evidence" value="ECO:0000314"/>
    <property type="project" value="UniProtKB"/>
</dbReference>
<dbReference type="GO" id="GO:0009060">
    <property type="term" value="P:aerobic respiration"/>
    <property type="evidence" value="ECO:0000303"/>
    <property type="project" value="ComplexPortal"/>
</dbReference>
<dbReference type="GO" id="GO:0042776">
    <property type="term" value="P:proton motive force-driven mitochondrial ATP synthesis"/>
    <property type="evidence" value="ECO:0000303"/>
    <property type="project" value="ComplexPortal"/>
</dbReference>
<dbReference type="InterPro" id="IPR019377">
    <property type="entry name" value="NADH_UbQ_OxRdtase_su10"/>
</dbReference>
<dbReference type="InterPro" id="IPR039993">
    <property type="entry name" value="NDUFB10"/>
</dbReference>
<dbReference type="PANTHER" id="PTHR13094:SF1">
    <property type="entry name" value="NADH DEHYDROGENASE [UBIQUINONE] 1 BETA SUBCOMPLEX SUBUNIT 10"/>
    <property type="match status" value="1"/>
</dbReference>
<dbReference type="PANTHER" id="PTHR13094">
    <property type="entry name" value="NADH-UBIQUINONE OXIDOREDUCTASE PDSW SUBUNIT"/>
    <property type="match status" value="1"/>
</dbReference>
<dbReference type="Pfam" id="PF10249">
    <property type="entry name" value="NDUFB10"/>
    <property type="match status" value="1"/>
</dbReference>